<organism>
    <name type="scientific">Homo sapiens</name>
    <name type="common">Human</name>
    <dbReference type="NCBI Taxonomy" id="9606"/>
    <lineage>
        <taxon>Eukaryota</taxon>
        <taxon>Metazoa</taxon>
        <taxon>Chordata</taxon>
        <taxon>Craniata</taxon>
        <taxon>Vertebrata</taxon>
        <taxon>Euteleostomi</taxon>
        <taxon>Mammalia</taxon>
        <taxon>Eutheria</taxon>
        <taxon>Euarchontoglires</taxon>
        <taxon>Primates</taxon>
        <taxon>Haplorrhini</taxon>
        <taxon>Catarrhini</taxon>
        <taxon>Hominidae</taxon>
        <taxon>Homo</taxon>
    </lineage>
</organism>
<protein>
    <recommendedName>
        <fullName evidence="11">Amine oxidase [copper-containing] 2</fullName>
        <ecNumber evidence="6">1.4.3.21</ecNumber>
    </recommendedName>
    <alternativeName>
        <fullName evidence="13">Amine oxidase copper-containing 2</fullName>
    </alternativeName>
    <alternativeName>
        <fullName evidence="11 12">Retina-specific copper amine oxidase</fullName>
        <shortName evidence="9">RAO</shortName>
    </alternativeName>
    <alternativeName>
        <fullName evidence="8">Semicarbazide-sensitive amine oxidase</fullName>
        <shortName evidence="8">SSAO</shortName>
    </alternativeName>
</protein>
<reference key="1">
    <citation type="journal article" date="1997" name="Genomics">
        <title>Human retina-specific amine oxidase (RAO): cDNA cloning, tissue expression, and chromosomal mapping.</title>
        <authorList>
            <person name="Imamura Y."/>
            <person name="Kubota R."/>
            <person name="Wang Y."/>
            <person name="Asakawa S."/>
            <person name="Kudoh J."/>
            <person name="Mashima Y."/>
            <person name="Oguchi Y."/>
            <person name="Shimizu N."/>
        </authorList>
    </citation>
    <scope>NUCLEOTIDE SEQUENCE [MRNA] (ISOFORM 2)</scope>
    <source>
        <tissue>Retina</tissue>
    </source>
</reference>
<reference key="2">
    <citation type="journal article" date="1998" name="Genomics">
        <title>Human retina-specific amine oxidase: genomic structure of the gene (AOC2), alternatively spliced variant, and mRNA expression in retina.</title>
        <authorList>
            <person name="Imamura Y."/>
            <person name="Noda S."/>
            <person name="Mashima Y."/>
            <person name="Kudoh J."/>
            <person name="Oguchi Y."/>
            <person name="Shimizu N."/>
        </authorList>
    </citation>
    <scope>NUCLEOTIDE SEQUENCE [GENOMIC DNA]</scope>
    <scope>ALTERNATIVE SPLICING</scope>
</reference>
<reference key="3">
    <citation type="submission" date="1998-07" db="EMBL/GenBank/DDBJ databases">
        <title>Human copper-containing amine oxidases.</title>
        <authorList>
            <person name="Zhang X."/>
            <person name="McIntire W.S."/>
        </authorList>
    </citation>
    <scope>NUCLEOTIDE SEQUENCE [MRNA] (ISOFORM 1)</scope>
    <source>
        <tissue>Retina</tissue>
    </source>
</reference>
<reference key="4">
    <citation type="submission" date="2005-05" db="EMBL/GenBank/DDBJ databases">
        <authorList>
            <consortium name="NIEHS SNPs program"/>
        </authorList>
    </citation>
    <scope>NUCLEOTIDE SEQUENCE [GENOMIC DNA]</scope>
    <scope>VARIANTS VAL-5; CYS-22; LEU-141; GLN-273 AND ASP-427</scope>
</reference>
<reference key="5">
    <citation type="journal article" date="2006" name="Nature">
        <title>DNA sequence of human chromosome 17 and analysis of rearrangement in the human lineage.</title>
        <authorList>
            <person name="Zody M.C."/>
            <person name="Garber M."/>
            <person name="Adams D.J."/>
            <person name="Sharpe T."/>
            <person name="Harrow J."/>
            <person name="Lupski J.R."/>
            <person name="Nicholson C."/>
            <person name="Searle S.M."/>
            <person name="Wilming L."/>
            <person name="Young S.K."/>
            <person name="Abouelleil A."/>
            <person name="Allen N.R."/>
            <person name="Bi W."/>
            <person name="Bloom T."/>
            <person name="Borowsky M.L."/>
            <person name="Bugalter B.E."/>
            <person name="Butler J."/>
            <person name="Chang J.L."/>
            <person name="Chen C.-K."/>
            <person name="Cook A."/>
            <person name="Corum B."/>
            <person name="Cuomo C.A."/>
            <person name="de Jong P.J."/>
            <person name="DeCaprio D."/>
            <person name="Dewar K."/>
            <person name="FitzGerald M."/>
            <person name="Gilbert J."/>
            <person name="Gibson R."/>
            <person name="Gnerre S."/>
            <person name="Goldstein S."/>
            <person name="Grafham D.V."/>
            <person name="Grocock R."/>
            <person name="Hafez N."/>
            <person name="Hagopian D.S."/>
            <person name="Hart E."/>
            <person name="Norman C.H."/>
            <person name="Humphray S."/>
            <person name="Jaffe D.B."/>
            <person name="Jones M."/>
            <person name="Kamal M."/>
            <person name="Khodiyar V.K."/>
            <person name="LaButti K."/>
            <person name="Laird G."/>
            <person name="Lehoczky J."/>
            <person name="Liu X."/>
            <person name="Lokyitsang T."/>
            <person name="Loveland J."/>
            <person name="Lui A."/>
            <person name="Macdonald P."/>
            <person name="Major J.E."/>
            <person name="Matthews L."/>
            <person name="Mauceli E."/>
            <person name="McCarroll S.A."/>
            <person name="Mihalev A.H."/>
            <person name="Mudge J."/>
            <person name="Nguyen C."/>
            <person name="Nicol R."/>
            <person name="O'Leary S.B."/>
            <person name="Osoegawa K."/>
            <person name="Schwartz D.C."/>
            <person name="Shaw-Smith C."/>
            <person name="Stankiewicz P."/>
            <person name="Steward C."/>
            <person name="Swarbreck D."/>
            <person name="Venkataraman V."/>
            <person name="Whittaker C.A."/>
            <person name="Yang X."/>
            <person name="Zimmer A.R."/>
            <person name="Bradley A."/>
            <person name="Hubbard T."/>
            <person name="Birren B.W."/>
            <person name="Rogers J."/>
            <person name="Lander E.S."/>
            <person name="Nusbaum C."/>
        </authorList>
    </citation>
    <scope>NUCLEOTIDE SEQUENCE [LARGE SCALE GENOMIC DNA]</scope>
</reference>
<reference key="6">
    <citation type="submission" date="2005-07" db="EMBL/GenBank/DDBJ databases">
        <authorList>
            <person name="Mural R.J."/>
            <person name="Istrail S."/>
            <person name="Sutton G.G."/>
            <person name="Florea L."/>
            <person name="Halpern A.L."/>
            <person name="Mobarry C.M."/>
            <person name="Lippert R."/>
            <person name="Walenz B."/>
            <person name="Shatkay H."/>
            <person name="Dew I."/>
            <person name="Miller J.R."/>
            <person name="Flanigan M.J."/>
            <person name="Edwards N.J."/>
            <person name="Bolanos R."/>
            <person name="Fasulo D."/>
            <person name="Halldorsson B.V."/>
            <person name="Hannenhalli S."/>
            <person name="Turner R."/>
            <person name="Yooseph S."/>
            <person name="Lu F."/>
            <person name="Nusskern D.R."/>
            <person name="Shue B.C."/>
            <person name="Zheng X.H."/>
            <person name="Zhong F."/>
            <person name="Delcher A.L."/>
            <person name="Huson D.H."/>
            <person name="Kravitz S.A."/>
            <person name="Mouchard L."/>
            <person name="Reinert K."/>
            <person name="Remington K.A."/>
            <person name="Clark A.G."/>
            <person name="Waterman M.S."/>
            <person name="Eichler E.E."/>
            <person name="Adams M.D."/>
            <person name="Hunkapiller M.W."/>
            <person name="Myers E.W."/>
            <person name="Venter J.C."/>
        </authorList>
    </citation>
    <scope>NUCLEOTIDE SEQUENCE [LARGE SCALE GENOMIC DNA]</scope>
</reference>
<reference key="7">
    <citation type="journal article" date="2004" name="Genome Res.">
        <title>The status, quality, and expansion of the NIH full-length cDNA project: the Mammalian Gene Collection (MGC).</title>
        <authorList>
            <consortium name="The MGC Project Team"/>
        </authorList>
    </citation>
    <scope>NUCLEOTIDE SEQUENCE [LARGE SCALE MRNA] (ISOFORM 1)</scope>
</reference>
<reference key="8">
    <citation type="journal article" date="2003" name="Inflamm. Res.">
        <title>High expression of semicarbazide-sensitive amine oxidase genes AOC2 and AOC3, but not the diamine oxidase gene AOC1 in human adipocytes.</title>
        <authorList>
            <person name="Heniquez A."/>
            <person name="Meissonnier G."/>
            <person name="Visentin V."/>
            <person name="Prevot D."/>
            <person name="Carpene C."/>
        </authorList>
    </citation>
    <scope>TISSUE SPECIFICITY</scope>
</reference>
<reference key="9">
    <citation type="journal article" date="2007" name="Biochimie">
        <title>Adipogenesis-related increase of semicarbazide-sensitive amine oxidase and monoamine oxidase in human adipocytes.</title>
        <authorList>
            <person name="Bour S."/>
            <person name="Daviaud D."/>
            <person name="Gres S."/>
            <person name="Lefort C."/>
            <person name="Prevot D."/>
            <person name="Zorzano A."/>
            <person name="Wabitsch M."/>
            <person name="Saulnier-Blache J.-S."/>
            <person name="Valet P."/>
            <person name="Carpene C."/>
        </authorList>
    </citation>
    <scope>TISSUE SPECIFICITY</scope>
    <scope>INDUCTION</scope>
</reference>
<reference key="10">
    <citation type="journal article" date="2009" name="Cell. Mol. Life Sci.">
        <title>The unique substrate specificity of human AOC2, a semicarbazide-sensitive amine oxidase.</title>
        <authorList>
            <person name="Kaitaniemi S."/>
            <person name="Elovaara H."/>
            <person name="Groen K."/>
            <person name="Kidron H."/>
            <person name="Liukkonen J."/>
            <person name="Salminen T."/>
            <person name="Salmi M."/>
            <person name="Jalkanen S."/>
            <person name="Elima K."/>
        </authorList>
    </citation>
    <scope>FUNCTION</scope>
    <scope>CATALYTIC ACTIVITY</scope>
    <scope>SUBCELLULAR LOCATION (ISOFORMS 1 AND 2)</scope>
    <scope>SUBUNIT</scope>
    <scope>TISSUE SPECIFICITY (ISOFORMS 1 AND 2)</scope>
    <scope>BIOPHYSICOCHEMICAL PROPERTIES</scope>
</reference>
<accession>O75106</accession>
<accession>A5PKW2</accession>
<accession>O00120</accession>
<accession>O75105</accession>
<accession>Q4TTW5</accession>
<accession>Q9UNY0</accession>
<sequence>MHLKIVLAFLALSLITIFALAYVLLTSPGGSSQPPHCPSVSHRAQPWPHPGQSQLFADLSREELTAVMRFLTQRLGPGLVDAAQAQPSDNCIFSVELQLPPKAAALAHLDRGSPPPAREALAIVLFGGQPQPNVSELVVGPLPHPSYMRDVTVERHGGPLPYHRRPVLRAEFTQMWRHLKEVELPKAPIFLSSTFNYNGSTLAAVHATPRGLRSGDRATWMALYHNISGVGLFLHPVGLELLLDHRALDPAHWTVQQVFYLGHYYADLGQLEREFKSGRLEVVRVPLPPPNGASSLRSRNSPGPLPPLQFSPQGSQYSVQGNLVVSSLWSFTFGHGVFSGLRIFDVRFQGERIAYEVSVQECVSIYGADSPKTMLTRYLDSSFGLGRNSRGLVRGVDCPYQATMVDIHILVGKGAVQLLPGAVCVFEEAQGLPLRRHHNYLQNHFYGGLASSALVVRSVSSVGNYDYIWDFVLYPNGALEGRVHATGYINTAFLKGGEEGLLFGNRVGERVLGTVHTHAFHFKLDLDVAGLKNWVVAEDVVFKPVAAPWNPEHWLQRPQLTRQVLGKEDLTAFSLGSPLPRYLYLASNQTNAWGHQRGYRIQIHSPLGIHIPLESDMERALSWGRYQLVVTQRKEEESQSSSIYHQNDIWTPTVTFADFINNETLLGEDLVAWVTASFLHIPHAEDIPNTVTLGNRVGFLLRPYNFFDEDPSIFSPGSVYFEKGQDAGLCSINPVACLPDLAACVPDLPPFSYHGF</sequence>
<gene>
    <name evidence="13" type="primary">AOC2</name>
</gene>
<comment type="function">
    <text evidence="6">Catalyzes the oxidative deamination of primary amines to the corresponding aldehydes with the concomitant production of hydrogen peroxide and ammonia (PubMed:19588076). Has a preference for 2-phenylethylamine, tryptamine and tyramine (PubMed:19588076). Could also act on methylamine and benzylamine but much less efficiently (PubMed:19588076).</text>
</comment>
<comment type="catalytic activity">
    <reaction evidence="6">
        <text>2-phenylethylamine + O2 + H2O = 2-phenylacetaldehyde + H2O2 + NH4(+)</text>
        <dbReference type="Rhea" id="RHEA:25265"/>
        <dbReference type="ChEBI" id="CHEBI:15377"/>
        <dbReference type="ChEBI" id="CHEBI:15379"/>
        <dbReference type="ChEBI" id="CHEBI:16240"/>
        <dbReference type="ChEBI" id="CHEBI:16424"/>
        <dbReference type="ChEBI" id="CHEBI:28938"/>
        <dbReference type="ChEBI" id="CHEBI:225237"/>
        <dbReference type="EC" id="1.4.3.21"/>
    </reaction>
    <physiologicalReaction direction="left-to-right" evidence="11">
        <dbReference type="Rhea" id="RHEA:25266"/>
    </physiologicalReaction>
</comment>
<comment type="catalytic activity">
    <reaction evidence="6">
        <text>tryptamine + O2 + H2O = indole-3-acetaldehyde + H2O2 + NH4(+)</text>
        <dbReference type="Rhea" id="RHEA:59416"/>
        <dbReference type="ChEBI" id="CHEBI:15377"/>
        <dbReference type="ChEBI" id="CHEBI:15379"/>
        <dbReference type="ChEBI" id="CHEBI:16240"/>
        <dbReference type="ChEBI" id="CHEBI:18086"/>
        <dbReference type="ChEBI" id="CHEBI:28938"/>
        <dbReference type="ChEBI" id="CHEBI:57887"/>
    </reaction>
    <physiologicalReaction direction="left-to-right" evidence="11">
        <dbReference type="Rhea" id="RHEA:59417"/>
    </physiologicalReaction>
</comment>
<comment type="catalytic activity">
    <reaction evidence="6">
        <text>tyramine + O2 + H2O = (4-hydroxyphenyl)acetaldehyde + H2O2 + NH4(+)</text>
        <dbReference type="Rhea" id="RHEA:30591"/>
        <dbReference type="ChEBI" id="CHEBI:15377"/>
        <dbReference type="ChEBI" id="CHEBI:15379"/>
        <dbReference type="ChEBI" id="CHEBI:15621"/>
        <dbReference type="ChEBI" id="CHEBI:16240"/>
        <dbReference type="ChEBI" id="CHEBI:28938"/>
        <dbReference type="ChEBI" id="CHEBI:327995"/>
    </reaction>
    <physiologicalReaction direction="left-to-right" evidence="11">
        <dbReference type="Rhea" id="RHEA:30592"/>
    </physiologicalReaction>
</comment>
<comment type="cofactor">
    <cofactor evidence="2">
        <name>Cu(2+)</name>
        <dbReference type="ChEBI" id="CHEBI:29036"/>
    </cofactor>
    <text evidence="2">Binds 1 copper ion per subunit.</text>
</comment>
<comment type="cofactor">
    <cofactor evidence="2">
        <name>Ca(2+)</name>
        <dbReference type="ChEBI" id="CHEBI:29108"/>
    </cofactor>
    <text evidence="2">Binds 2 calcium ions per subunit.</text>
</comment>
<comment type="cofactor">
    <cofactor evidence="2">
        <name>L-topaquinone</name>
        <dbReference type="ChEBI" id="CHEBI:79027"/>
    </cofactor>
    <text evidence="2">Contains 1 topaquinone per subunit.</text>
</comment>
<comment type="biophysicochemical properties">
    <kinetics>
        <KM evidence="6">0.056 mM for tryptamine</KM>
        <KM evidence="6">0.077 mM for 2-phenylethylamine</KM>
        <KM evidence="6">0.167 mM for benzylamine</KM>
        <KM evidence="6">0.178 mM for p-tyramine</KM>
        <KM evidence="6">1.7 mM for methylamine</KM>
        <Vmax evidence="6">28.0 nmol/h/mg enzyme with tryptamine as substrate</Vmax>
        <Vmax evidence="6">44.0 nmol/h/mg enzyme with 2-phenylethylamine as substrate</Vmax>
        <Vmax evidence="6">11.0 nmol/h/mg enzyme with benzylamine as substrate</Vmax>
        <Vmax evidence="6">43.0 nmol/h/mg enzyme with p-tyramine as substrate</Vmax>
        <Vmax evidence="6">2.4 nmol/h/mg enzyme with methylamine as substrate</Vmax>
    </kinetics>
</comment>
<comment type="subunit">
    <text evidence="6 11">Homodimer; disulfide-linked (Probable). Probably forms heterodimers with AOC3 (PubMed:19588076).</text>
</comment>
<comment type="interaction">
    <interactant intactId="EBI-17685278">
        <id>O75106</id>
    </interactant>
    <interactant intactId="EBI-13059134">
        <id>Q13520</id>
        <label>AQP6</label>
    </interactant>
    <organismsDiffer>false</organismsDiffer>
    <experiments>3</experiments>
</comment>
<comment type="interaction">
    <interactant intactId="EBI-17685278">
        <id>O75106</id>
    </interactant>
    <interactant intactId="EBI-781551">
        <id>Q9Y282</id>
        <label>ERGIC3</label>
    </interactant>
    <organismsDiffer>false</organismsDiffer>
    <experiments>3</experiments>
</comment>
<comment type="subcellular location">
    <molecule>Isoform 1</molecule>
    <subcellularLocation>
        <location evidence="6">Cell membrane</location>
        <topology evidence="2">Single-pass type II membrane protein</topology>
    </subcellularLocation>
</comment>
<comment type="subcellular location">
    <molecule>Isoform 2</molecule>
    <subcellularLocation>
        <location evidence="6">Cytoplasm</location>
    </subcellularLocation>
    <text evidence="6">Either not translocated to the plasma membrane or below detection level.</text>
</comment>
<comment type="alternative products">
    <event type="alternative splicing"/>
    <isoform>
        <id>O75106-1</id>
        <name>1</name>
        <name>Long</name>
        <sequence type="displayed"/>
    </isoform>
    <isoform>
        <id>O75106-2</id>
        <name>2</name>
        <name>Short</name>
        <sequence type="described" ref="VSP_006549"/>
    </isoform>
</comment>
<comment type="tissue specificity">
    <text evidence="4 5 6">Expressed in many tissues including adipocytes with higher expression in retina where it is active.</text>
</comment>
<comment type="tissue specificity">
    <molecule>Isoform 1</molecule>
    <text evidence="4 5 6">Not expressed in testis.</text>
</comment>
<comment type="tissue specificity">
    <molecule>Isoform 2</molecule>
    <text evidence="4 5 6">Not expressed in thymus.</text>
</comment>
<comment type="induction">
    <text evidence="5">Up-regulated during in vitro adipocyte differentiation.</text>
</comment>
<comment type="PTM">
    <text evidence="2">Topaquinone (TPQ) is generated by copper-dependent autoxidation of a specific tyrosyl residue.</text>
</comment>
<comment type="similarity">
    <text evidence="10">Belongs to the copper/topaquinone oxidase family.</text>
</comment>
<dbReference type="EC" id="1.4.3.21" evidence="6"/>
<dbReference type="EMBL" id="D88213">
    <property type="protein sequence ID" value="BAA19001.1"/>
    <property type="molecule type" value="mRNA"/>
</dbReference>
<dbReference type="EMBL" id="AB012943">
    <property type="protein sequence ID" value="BAA32590.1"/>
    <property type="molecule type" value="Genomic_DNA"/>
</dbReference>
<dbReference type="EMBL" id="AB012943">
    <property type="protein sequence ID" value="BAA32589.1"/>
    <property type="molecule type" value="Genomic_DNA"/>
</dbReference>
<dbReference type="EMBL" id="AF081363">
    <property type="protein sequence ID" value="AAD39345.1"/>
    <property type="molecule type" value="mRNA"/>
</dbReference>
<dbReference type="EMBL" id="DQ060035">
    <property type="protein sequence ID" value="AAY43129.1"/>
    <property type="molecule type" value="Genomic_DNA"/>
</dbReference>
<dbReference type="EMBL" id="AC016889">
    <property type="status" value="NOT_ANNOTATED_CDS"/>
    <property type="molecule type" value="Genomic_DNA"/>
</dbReference>
<dbReference type="EMBL" id="CH471152">
    <property type="protein sequence ID" value="EAW60895.1"/>
    <property type="molecule type" value="Genomic_DNA"/>
</dbReference>
<dbReference type="EMBL" id="BC142641">
    <property type="protein sequence ID" value="AAI42642.1"/>
    <property type="molecule type" value="mRNA"/>
</dbReference>
<dbReference type="CCDS" id="CCDS11443.1">
    <molecule id="O75106-1"/>
</dbReference>
<dbReference type="CCDS" id="CCDS45690.1">
    <molecule id="O75106-2"/>
</dbReference>
<dbReference type="RefSeq" id="NP_001149.2">
    <molecule id="O75106-2"/>
    <property type="nucleotide sequence ID" value="NM_001158.5"/>
</dbReference>
<dbReference type="RefSeq" id="NP_033720.2">
    <molecule id="O75106-1"/>
    <property type="nucleotide sequence ID" value="NM_009590.4"/>
</dbReference>
<dbReference type="SMR" id="O75106"/>
<dbReference type="BioGRID" id="106811">
    <property type="interactions" value="23"/>
</dbReference>
<dbReference type="FunCoup" id="O75106">
    <property type="interactions" value="151"/>
</dbReference>
<dbReference type="IntAct" id="O75106">
    <property type="interactions" value="8"/>
</dbReference>
<dbReference type="STRING" id="9606.ENSP00000253799"/>
<dbReference type="BindingDB" id="O75106"/>
<dbReference type="ChEMBL" id="CHEMBL4112"/>
<dbReference type="GlyConnect" id="1714">
    <property type="glycosylation" value="2 N-Linked glycans (1 site)"/>
</dbReference>
<dbReference type="GlyCosmos" id="O75106">
    <property type="glycosylation" value="5 sites, 2 glycans"/>
</dbReference>
<dbReference type="GlyGen" id="O75106">
    <property type="glycosylation" value="4 sites, 2 N-linked glycans (1 site)"/>
</dbReference>
<dbReference type="iPTMnet" id="O75106"/>
<dbReference type="PhosphoSitePlus" id="O75106"/>
<dbReference type="BioMuta" id="AOC2"/>
<dbReference type="MassIVE" id="O75106"/>
<dbReference type="PaxDb" id="9606-ENSP00000253799"/>
<dbReference type="PeptideAtlas" id="O75106"/>
<dbReference type="ProteomicsDB" id="49761">
    <molecule id="O75106-1"/>
</dbReference>
<dbReference type="ProteomicsDB" id="49762">
    <molecule id="O75106-2"/>
</dbReference>
<dbReference type="Pumba" id="O75106"/>
<dbReference type="Antibodypedia" id="17156">
    <property type="antibodies" value="81 antibodies from 16 providers"/>
</dbReference>
<dbReference type="DNASU" id="314"/>
<dbReference type="Ensembl" id="ENST00000253799.8">
    <molecule id="O75106-1"/>
    <property type="protein sequence ID" value="ENSP00000253799.2"/>
    <property type="gene ID" value="ENSG00000131480.9"/>
</dbReference>
<dbReference type="Ensembl" id="ENST00000452774.2">
    <molecule id="O75106-2"/>
    <property type="protein sequence ID" value="ENSP00000406134.1"/>
    <property type="gene ID" value="ENSG00000131480.9"/>
</dbReference>
<dbReference type="GeneID" id="314"/>
<dbReference type="KEGG" id="hsa:314"/>
<dbReference type="MANE-Select" id="ENST00000253799.8">
    <property type="protein sequence ID" value="ENSP00000253799.2"/>
    <property type="RefSeq nucleotide sequence ID" value="NM_009590.4"/>
    <property type="RefSeq protein sequence ID" value="NP_033720.2"/>
</dbReference>
<dbReference type="UCSC" id="uc002ibt.5">
    <molecule id="O75106-1"/>
    <property type="organism name" value="human"/>
</dbReference>
<dbReference type="AGR" id="HGNC:549"/>
<dbReference type="CTD" id="314"/>
<dbReference type="DisGeNET" id="314"/>
<dbReference type="GeneCards" id="AOC2"/>
<dbReference type="HGNC" id="HGNC:549">
    <property type="gene designation" value="AOC2"/>
</dbReference>
<dbReference type="HPA" id="ENSG00000131480">
    <property type="expression patterns" value="Low tissue specificity"/>
</dbReference>
<dbReference type="MIM" id="602268">
    <property type="type" value="gene"/>
</dbReference>
<dbReference type="neXtProt" id="NX_O75106"/>
<dbReference type="OpenTargets" id="ENSG00000131480"/>
<dbReference type="PharmGKB" id="PA24839"/>
<dbReference type="VEuPathDB" id="HostDB:ENSG00000131480"/>
<dbReference type="eggNOG" id="KOG1186">
    <property type="taxonomic scope" value="Eukaryota"/>
</dbReference>
<dbReference type="GeneTree" id="ENSGT00950000183207"/>
<dbReference type="HOGENOM" id="CLU_015739_1_0_1"/>
<dbReference type="InParanoid" id="O75106"/>
<dbReference type="OMA" id="HFTRAED"/>
<dbReference type="OrthoDB" id="5379943at2759"/>
<dbReference type="PAN-GO" id="O75106">
    <property type="GO annotations" value="4 GO annotations based on evolutionary models"/>
</dbReference>
<dbReference type="PhylomeDB" id="O75106"/>
<dbReference type="TreeFam" id="TF314750"/>
<dbReference type="BRENDA" id="1.4.3.21">
    <property type="organism ID" value="2681"/>
</dbReference>
<dbReference type="PathwayCommons" id="O75106"/>
<dbReference type="Reactome" id="R-HSA-211945">
    <property type="pathway name" value="Phase I - Functionalization of compounds"/>
</dbReference>
<dbReference type="SABIO-RK" id="O75106"/>
<dbReference type="SignaLink" id="O75106"/>
<dbReference type="BioGRID-ORCS" id="314">
    <property type="hits" value="15 hits in 1143 CRISPR screens"/>
</dbReference>
<dbReference type="GenomeRNAi" id="314"/>
<dbReference type="Pharos" id="O75106">
    <property type="development level" value="Tchem"/>
</dbReference>
<dbReference type="PRO" id="PR:O75106"/>
<dbReference type="Proteomes" id="UP000005640">
    <property type="component" value="Chromosome 17"/>
</dbReference>
<dbReference type="RNAct" id="O75106">
    <property type="molecule type" value="protein"/>
</dbReference>
<dbReference type="Bgee" id="ENSG00000131480">
    <property type="expression patterns" value="Expressed in sperm and 105 other cell types or tissues"/>
</dbReference>
<dbReference type="GO" id="GO:0005737">
    <property type="term" value="C:cytoplasm"/>
    <property type="evidence" value="ECO:0000314"/>
    <property type="project" value="UniProtKB"/>
</dbReference>
<dbReference type="GO" id="GO:0005886">
    <property type="term" value="C:plasma membrane"/>
    <property type="evidence" value="ECO:0000314"/>
    <property type="project" value="UniProtKB"/>
</dbReference>
<dbReference type="GO" id="GO:0005507">
    <property type="term" value="F:copper ion binding"/>
    <property type="evidence" value="ECO:0000318"/>
    <property type="project" value="GO_Central"/>
</dbReference>
<dbReference type="GO" id="GO:0009055">
    <property type="term" value="F:electron transfer activity"/>
    <property type="evidence" value="ECO:0000304"/>
    <property type="project" value="UniProtKB"/>
</dbReference>
<dbReference type="GO" id="GO:0008131">
    <property type="term" value="F:primary methylamine oxidase activity"/>
    <property type="evidence" value="ECO:0000314"/>
    <property type="project" value="UniProtKB"/>
</dbReference>
<dbReference type="GO" id="GO:0048038">
    <property type="term" value="F:quinone binding"/>
    <property type="evidence" value="ECO:0007669"/>
    <property type="project" value="InterPro"/>
</dbReference>
<dbReference type="GO" id="GO:0009308">
    <property type="term" value="P:amine metabolic process"/>
    <property type="evidence" value="ECO:0000318"/>
    <property type="project" value="GO_Central"/>
</dbReference>
<dbReference type="GO" id="GO:0006584">
    <property type="term" value="P:catecholamine metabolic process"/>
    <property type="evidence" value="ECO:0007669"/>
    <property type="project" value="UniProtKB-KW"/>
</dbReference>
<dbReference type="GO" id="GO:0007601">
    <property type="term" value="P:visual perception"/>
    <property type="evidence" value="ECO:0000304"/>
    <property type="project" value="ProtInc"/>
</dbReference>
<dbReference type="GO" id="GO:0006805">
    <property type="term" value="P:xenobiotic metabolic process"/>
    <property type="evidence" value="ECO:0000304"/>
    <property type="project" value="Reactome"/>
</dbReference>
<dbReference type="FunFam" id="2.70.98.20:FF:000005">
    <property type="entry name" value="Amine oxidase"/>
    <property type="match status" value="1"/>
</dbReference>
<dbReference type="FunFam" id="3.10.450.40:FF:000001">
    <property type="entry name" value="Amine oxidase"/>
    <property type="match status" value="1"/>
</dbReference>
<dbReference type="FunFam" id="3.10.450.40:FF:000003">
    <property type="entry name" value="Amine oxidase"/>
    <property type="match status" value="1"/>
</dbReference>
<dbReference type="Gene3D" id="3.10.450.40">
    <property type="match status" value="2"/>
</dbReference>
<dbReference type="Gene3D" id="2.70.98.20">
    <property type="entry name" value="Copper amine oxidase, catalytic domain"/>
    <property type="match status" value="1"/>
</dbReference>
<dbReference type="InterPro" id="IPR049947">
    <property type="entry name" value="Cu_Am_Ox_Cu-bd"/>
</dbReference>
<dbReference type="InterPro" id="IPR049948">
    <property type="entry name" value="Cu_Am_ox_TPQ-bd"/>
</dbReference>
<dbReference type="InterPro" id="IPR000269">
    <property type="entry name" value="Cu_amine_oxidase"/>
</dbReference>
<dbReference type="InterPro" id="IPR015798">
    <property type="entry name" value="Cu_amine_oxidase_C"/>
</dbReference>
<dbReference type="InterPro" id="IPR036460">
    <property type="entry name" value="Cu_amine_oxidase_C_sf"/>
</dbReference>
<dbReference type="InterPro" id="IPR016182">
    <property type="entry name" value="Cu_amine_oxidase_N-reg"/>
</dbReference>
<dbReference type="InterPro" id="IPR015800">
    <property type="entry name" value="Cu_amine_oxidase_N2"/>
</dbReference>
<dbReference type="InterPro" id="IPR015802">
    <property type="entry name" value="Cu_amine_oxidase_N3"/>
</dbReference>
<dbReference type="PANTHER" id="PTHR10638">
    <property type="entry name" value="COPPER AMINE OXIDASE"/>
    <property type="match status" value="1"/>
</dbReference>
<dbReference type="PANTHER" id="PTHR10638:SF4">
    <property type="entry name" value="RETINA-SPECIFIC COPPER AMINE OXIDASE"/>
    <property type="match status" value="1"/>
</dbReference>
<dbReference type="Pfam" id="PF01179">
    <property type="entry name" value="Cu_amine_oxid"/>
    <property type="match status" value="1"/>
</dbReference>
<dbReference type="Pfam" id="PF02727">
    <property type="entry name" value="Cu_amine_oxidN2"/>
    <property type="match status" value="1"/>
</dbReference>
<dbReference type="Pfam" id="PF02728">
    <property type="entry name" value="Cu_amine_oxidN3"/>
    <property type="match status" value="1"/>
</dbReference>
<dbReference type="PRINTS" id="PR00766">
    <property type="entry name" value="CUDAOXIDASE"/>
</dbReference>
<dbReference type="SUPFAM" id="SSF49998">
    <property type="entry name" value="Amine oxidase catalytic domain"/>
    <property type="match status" value="1"/>
</dbReference>
<dbReference type="SUPFAM" id="SSF54416">
    <property type="entry name" value="Amine oxidase N-terminal region"/>
    <property type="match status" value="2"/>
</dbReference>
<dbReference type="PROSITE" id="PS01164">
    <property type="entry name" value="COPPER_AMINE_OXID_1"/>
    <property type="match status" value="1"/>
</dbReference>
<dbReference type="PROSITE" id="PS01165">
    <property type="entry name" value="COPPER_AMINE_OXID_2"/>
    <property type="match status" value="1"/>
</dbReference>
<keyword id="KW-0025">Alternative splicing</keyword>
<keyword id="KW-0106">Calcium</keyword>
<keyword id="KW-0128">Catecholamine metabolism</keyword>
<keyword id="KW-1003">Cell membrane</keyword>
<keyword id="KW-0186">Copper</keyword>
<keyword id="KW-0963">Cytoplasm</keyword>
<keyword id="KW-1015">Disulfide bond</keyword>
<keyword id="KW-0325">Glycoprotein</keyword>
<keyword id="KW-0472">Membrane</keyword>
<keyword id="KW-0479">Metal-binding</keyword>
<keyword id="KW-0560">Oxidoreductase</keyword>
<keyword id="KW-1267">Proteomics identification</keyword>
<keyword id="KW-1185">Reference proteome</keyword>
<keyword id="KW-0735">Signal-anchor</keyword>
<keyword id="KW-0801">TPQ</keyword>
<keyword id="KW-0812">Transmembrane</keyword>
<keyword id="KW-1133">Transmembrane helix</keyword>
<evidence type="ECO:0000250" key="1">
    <source>
        <dbReference type="UniProtKB" id="P19801"/>
    </source>
</evidence>
<evidence type="ECO:0000250" key="2">
    <source>
        <dbReference type="UniProtKB" id="Q16853"/>
    </source>
</evidence>
<evidence type="ECO:0000255" key="3"/>
<evidence type="ECO:0000269" key="4">
    <source>
    </source>
</evidence>
<evidence type="ECO:0000269" key="5">
    <source>
    </source>
</evidence>
<evidence type="ECO:0000269" key="6">
    <source>
    </source>
</evidence>
<evidence type="ECO:0000269" key="7">
    <source ref="4"/>
</evidence>
<evidence type="ECO:0000303" key="8">
    <source>
    </source>
</evidence>
<evidence type="ECO:0000303" key="9">
    <source>
    </source>
</evidence>
<evidence type="ECO:0000305" key="10"/>
<evidence type="ECO:0000305" key="11">
    <source>
    </source>
</evidence>
<evidence type="ECO:0000305" key="12">
    <source>
    </source>
</evidence>
<evidence type="ECO:0000312" key="13">
    <source>
        <dbReference type="HGNC" id="HGNC:549"/>
    </source>
</evidence>
<name>AOC2_HUMAN</name>
<proteinExistence type="evidence at protein level"/>
<feature type="chain" id="PRO_0000035671" description="Amine oxidase [copper-containing] 2">
    <location>
        <begin position="1"/>
        <end position="756"/>
    </location>
</feature>
<feature type="topological domain" description="Cytoplasmic" evidence="2">
    <location>
        <begin position="1"/>
        <end position="4"/>
    </location>
</feature>
<feature type="transmembrane region" description="Helical" evidence="3">
    <location>
        <begin position="5"/>
        <end position="25"/>
    </location>
</feature>
<feature type="topological domain" description="Extracellular" evidence="2">
    <location>
        <begin position="26"/>
        <end position="756"/>
    </location>
</feature>
<feature type="active site" description="Proton acceptor" evidence="1">
    <location>
        <position position="380"/>
    </location>
</feature>
<feature type="active site" description="Schiff-base intermediate with substrate; via topaquinone" evidence="2">
    <location>
        <position position="465"/>
    </location>
</feature>
<feature type="binding site" evidence="2">
    <location>
        <position position="516"/>
    </location>
    <ligand>
        <name>Cu(2+)</name>
        <dbReference type="ChEBI" id="CHEBI:29036"/>
    </ligand>
</feature>
<feature type="binding site" evidence="2">
    <location>
        <position position="518"/>
    </location>
    <ligand>
        <name>Cu(2+)</name>
        <dbReference type="ChEBI" id="CHEBI:29036"/>
    </ligand>
</feature>
<feature type="binding site" evidence="2">
    <location>
        <position position="525"/>
    </location>
    <ligand>
        <name>Ca(2+)</name>
        <dbReference type="ChEBI" id="CHEBI:29108"/>
        <label>1</label>
    </ligand>
</feature>
<feature type="binding site" evidence="2">
    <location>
        <position position="526"/>
    </location>
    <ligand>
        <name>Ca(2+)</name>
        <dbReference type="ChEBI" id="CHEBI:29108"/>
        <label>1</label>
    </ligand>
</feature>
<feature type="binding site" evidence="2">
    <location>
        <position position="527"/>
    </location>
    <ligand>
        <name>Ca(2+)</name>
        <dbReference type="ChEBI" id="CHEBI:29108"/>
        <label>1</label>
    </ligand>
</feature>
<feature type="binding site" evidence="2">
    <location>
        <position position="568"/>
    </location>
    <ligand>
        <name>Ca(2+)</name>
        <dbReference type="ChEBI" id="CHEBI:29108"/>
        <label>2</label>
    </ligand>
</feature>
<feature type="binding site" evidence="2">
    <location>
        <position position="637"/>
    </location>
    <ligand>
        <name>Ca(2+)</name>
        <dbReference type="ChEBI" id="CHEBI:29108"/>
        <label>2</label>
    </ligand>
</feature>
<feature type="binding site" evidence="2">
    <location>
        <position position="659"/>
    </location>
    <ligand>
        <name>Ca(2+)</name>
        <dbReference type="ChEBI" id="CHEBI:29108"/>
        <label>2</label>
    </ligand>
</feature>
<feature type="binding site" evidence="2">
    <location>
        <position position="661"/>
    </location>
    <ligand>
        <name>Ca(2+)</name>
        <dbReference type="ChEBI" id="CHEBI:29108"/>
        <label>2</label>
    </ligand>
</feature>
<feature type="binding site" evidence="2">
    <location>
        <position position="663"/>
    </location>
    <ligand>
        <name>Ca(2+)</name>
        <dbReference type="ChEBI" id="CHEBI:29108"/>
        <label>2</label>
    </ligand>
</feature>
<feature type="binding site" evidence="2">
    <location>
        <position position="669"/>
    </location>
    <ligand>
        <name>Ca(2+)</name>
        <dbReference type="ChEBI" id="CHEBI:29108"/>
        <label>1</label>
    </ligand>
</feature>
<feature type="binding site" evidence="2">
    <location>
        <position position="670"/>
    </location>
    <ligand>
        <name>Ca(2+)</name>
        <dbReference type="ChEBI" id="CHEBI:29108"/>
        <label>1</label>
    </ligand>
</feature>
<feature type="binding site" evidence="2">
    <location>
        <position position="680"/>
    </location>
    <ligand>
        <name>Cu(2+)</name>
        <dbReference type="ChEBI" id="CHEBI:29036"/>
    </ligand>
</feature>
<feature type="modified residue" description="2',4',5'-topaquinone" evidence="2">
    <location>
        <position position="465"/>
    </location>
</feature>
<feature type="glycosylation site" description="N-linked (GlcNAc...) asparagine" evidence="3">
    <location>
        <position position="133"/>
    </location>
</feature>
<feature type="glycosylation site" description="N-linked (GlcNAc...) asparagine" evidence="3">
    <location>
        <position position="198"/>
    </location>
</feature>
<feature type="glycosylation site" description="N-linked (GlcNAc...) asparagine" evidence="3">
    <location>
        <position position="226"/>
    </location>
</feature>
<feature type="glycosylation site" description="N-linked (GlcNAc...) asparagine" evidence="3">
    <location>
        <position position="662"/>
    </location>
</feature>
<feature type="disulfide bond" evidence="2">
    <location>
        <begin position="398"/>
        <end position="424"/>
    </location>
</feature>
<feature type="disulfide bond" evidence="2">
    <location>
        <begin position="730"/>
        <end position="737"/>
    </location>
</feature>
<feature type="disulfide bond" description="Interchain" evidence="2">
    <location>
        <position position="744"/>
    </location>
</feature>
<feature type="splice variant" id="VSP_006549" description="In isoform 2." evidence="9">
    <location>
        <begin position="599"/>
        <end position="625"/>
    </location>
</feature>
<feature type="sequence variant" id="VAR_025022" description="In dbSNP:rs34230945." evidence="7">
    <original>I</original>
    <variation>V</variation>
    <location>
        <position position="5"/>
    </location>
</feature>
<feature type="sequence variant" id="VAR_025023" description="In dbSNP:rs34435306." evidence="7">
    <original>Y</original>
    <variation>C</variation>
    <location>
        <position position="22"/>
    </location>
</feature>
<feature type="sequence variant" id="VAR_025024" description="In dbSNP:rs35833794." evidence="7">
    <original>P</original>
    <variation>L</variation>
    <location>
        <position position="141"/>
    </location>
</feature>
<feature type="sequence variant" id="VAR_025025" description="In dbSNP:rs35508987." evidence="7">
    <original>R</original>
    <variation>Q</variation>
    <location>
        <position position="273"/>
    </location>
</feature>
<feature type="sequence variant" id="VAR_025026" description="In dbSNP:rs34351794." evidence="7">
    <original>E</original>
    <variation>D</variation>
    <location>
        <position position="427"/>
    </location>
</feature>
<feature type="sequence conflict" description="In Ref. 1 and 2." evidence="10" ref="1 2">
    <original>E</original>
    <variation>D</variation>
    <location>
        <position position="181"/>
    </location>
</feature>
<feature type="sequence conflict" description="In Ref. 1 and 2." evidence="10" ref="1 2">
    <original>GDRA</original>
    <variation>RERT</variation>
    <location>
        <begin position="215"/>
        <end position="218"/>
    </location>
</feature>
<feature type="sequence conflict" description="In Ref. 1." evidence="10" ref="1">
    <original>MA</original>
    <variation>IG</variation>
    <location>
        <begin position="221"/>
        <end position="222"/>
    </location>
</feature>
<feature type="sequence conflict" description="In Ref. 1 and 2." evidence="10" ref="1 2">
    <original>H</original>
    <variation>Q</variation>
    <location>
        <position position="610"/>
    </location>
</feature>